<protein>
    <recommendedName>
        <fullName evidence="3">Protein phosphatase EYA4</fullName>
        <ecNumber evidence="2">3.1.3.48</ecNumber>
    </recommendedName>
    <alternativeName>
        <fullName>Eyes absent homolog 4</fullName>
    </alternativeName>
</protein>
<sequence length="119" mass="13340">RKLAFRYRRVKELYNTYKNNIGGLLGPAKRDAWLQLRAEIEALTDSWLTNALKSLSIISTRSNCVNVLVTTTQLIPALAKVLLYSLGGAFPIENIYSATKIGKESCFERIVSRFGTNIT</sequence>
<proteinExistence type="evidence at transcript level"/>
<reference key="1">
    <citation type="journal article" date="1999" name="Hum. Mol. Genet.">
        <title>EYA4, a novel vertebrate gene related to Drosophila eyes absent.</title>
        <authorList>
            <person name="Borsani G."/>
            <person name="DeGrandi A."/>
            <person name="Ballabio A."/>
            <person name="Bulfone A."/>
            <person name="Bernard L."/>
            <person name="Banfi S."/>
            <person name="Gattuso C."/>
            <person name="Mariani M."/>
            <person name="Dixon M."/>
            <person name="Donnai D."/>
            <person name="Metcalfe K."/>
            <person name="Winter R."/>
            <person name="Robertson M."/>
            <person name="Axton R."/>
            <person name="Brown A."/>
            <person name="van Heyningen V."/>
            <person name="Hanson I."/>
        </authorList>
    </citation>
    <scope>NUCLEOTIDE SEQUENCE [MRNA]</scope>
    <source>
        <tissue>Embryo</tissue>
    </source>
</reference>
<comment type="function">
    <text evidence="2">Tyrosine phosphatase that specifically dephosphorylates 'Tyr-142' of histone H2AX (H2AXY142ph). 'Tyr-142' phosphorylation of histone H2AX plays a central role in DNA repair and acts as a mark that distinguishes between apoptotic and repair responses to genotoxic stress. Promotes efficient DNA repair by dephosphorylating H2AX, promoting the recruitment of DNA repair complexes containing MDC1. Its function as histone phosphatase probably explains its role in transcription regulation during organogenesis. May be involved in development of the eye (By similarity).</text>
</comment>
<comment type="catalytic activity">
    <reaction evidence="2">
        <text>O-phospho-L-tyrosyl-[protein] + H2O = L-tyrosyl-[protein] + phosphate</text>
        <dbReference type="Rhea" id="RHEA:10684"/>
        <dbReference type="Rhea" id="RHEA-COMP:10136"/>
        <dbReference type="Rhea" id="RHEA-COMP:20101"/>
        <dbReference type="ChEBI" id="CHEBI:15377"/>
        <dbReference type="ChEBI" id="CHEBI:43474"/>
        <dbReference type="ChEBI" id="CHEBI:46858"/>
        <dbReference type="ChEBI" id="CHEBI:61978"/>
        <dbReference type="EC" id="3.1.3.48"/>
    </reaction>
</comment>
<comment type="cofactor">
    <cofactor evidence="1">
        <name>Mg(2+)</name>
        <dbReference type="ChEBI" id="CHEBI:18420"/>
    </cofactor>
    <text evidence="1">Binds 1 Mg(2+) ion per subunit.</text>
</comment>
<comment type="subcellular location">
    <subcellularLocation>
        <location evidence="2">Cytoplasm</location>
    </subcellularLocation>
    <subcellularLocation>
        <location evidence="2">Nucleus</location>
    </subcellularLocation>
</comment>
<comment type="similarity">
    <text evidence="3">Belongs to the HAD-like hydrolase superfamily. EYA family.</text>
</comment>
<accession>Q9YH98</accession>
<organism>
    <name type="scientific">Gallus gallus</name>
    <name type="common">Chicken</name>
    <dbReference type="NCBI Taxonomy" id="9031"/>
    <lineage>
        <taxon>Eukaryota</taxon>
        <taxon>Metazoa</taxon>
        <taxon>Chordata</taxon>
        <taxon>Craniata</taxon>
        <taxon>Vertebrata</taxon>
        <taxon>Euteleostomi</taxon>
        <taxon>Archelosauria</taxon>
        <taxon>Archosauria</taxon>
        <taxon>Dinosauria</taxon>
        <taxon>Saurischia</taxon>
        <taxon>Theropoda</taxon>
        <taxon>Coelurosauria</taxon>
        <taxon>Aves</taxon>
        <taxon>Neognathae</taxon>
        <taxon>Galloanserae</taxon>
        <taxon>Galliformes</taxon>
        <taxon>Phasianidae</taxon>
        <taxon>Phasianinae</taxon>
        <taxon>Gallus</taxon>
    </lineage>
</organism>
<name>EYA4_CHICK</name>
<feature type="chain" id="PRO_0000218653" description="Protein phosphatase EYA4">
    <location>
        <begin position="1" status="less than"/>
        <end position="119" status="greater than"/>
    </location>
</feature>
<feature type="non-terminal residue">
    <location>
        <position position="1"/>
    </location>
</feature>
<feature type="non-terminal residue">
    <location>
        <position position="119"/>
    </location>
</feature>
<keyword id="KW-0010">Activator</keyword>
<keyword id="KW-0156">Chromatin regulator</keyword>
<keyword id="KW-0963">Cytoplasm</keyword>
<keyword id="KW-0217">Developmental protein</keyword>
<keyword id="KW-0227">DNA damage</keyword>
<keyword id="KW-0234">DNA repair</keyword>
<keyword id="KW-0378">Hydrolase</keyword>
<keyword id="KW-0460">Magnesium</keyword>
<keyword id="KW-0539">Nucleus</keyword>
<keyword id="KW-0904">Protein phosphatase</keyword>
<keyword id="KW-1185">Reference proteome</keyword>
<keyword id="KW-0804">Transcription</keyword>
<keyword id="KW-0805">Transcription regulation</keyword>
<dbReference type="EC" id="3.1.3.48" evidence="2"/>
<dbReference type="EMBL" id="AJ008004">
    <property type="protein sequence ID" value="CAA07824.1"/>
    <property type="molecule type" value="mRNA"/>
</dbReference>
<dbReference type="RefSeq" id="NP_001292106.1">
    <property type="nucleotide sequence ID" value="NM_001305177.1"/>
</dbReference>
<dbReference type="SMR" id="Q9YH98"/>
<dbReference type="STRING" id="9031.ENSGALP00000045083"/>
<dbReference type="PaxDb" id="9031-ENSGALP00000022622"/>
<dbReference type="GeneID" id="395716"/>
<dbReference type="KEGG" id="gga:395716"/>
<dbReference type="CTD" id="2070"/>
<dbReference type="VEuPathDB" id="HostDB:geneid_395716"/>
<dbReference type="eggNOG" id="KOG3107">
    <property type="taxonomic scope" value="Eukaryota"/>
</dbReference>
<dbReference type="InParanoid" id="Q9YH98"/>
<dbReference type="OrthoDB" id="167668at2759"/>
<dbReference type="PhylomeDB" id="Q9YH98"/>
<dbReference type="Proteomes" id="UP000000539">
    <property type="component" value="Unassembled WGS sequence"/>
</dbReference>
<dbReference type="GO" id="GO:0005737">
    <property type="term" value="C:cytoplasm"/>
    <property type="evidence" value="ECO:0007669"/>
    <property type="project" value="UniProtKB-SubCell"/>
</dbReference>
<dbReference type="GO" id="GO:0005634">
    <property type="term" value="C:nucleus"/>
    <property type="evidence" value="ECO:0007669"/>
    <property type="project" value="UniProtKB-SubCell"/>
</dbReference>
<dbReference type="GO" id="GO:0004725">
    <property type="term" value="F:protein tyrosine phosphatase activity"/>
    <property type="evidence" value="ECO:0007669"/>
    <property type="project" value="UniProtKB-EC"/>
</dbReference>
<dbReference type="GO" id="GO:0006325">
    <property type="term" value="P:chromatin organization"/>
    <property type="evidence" value="ECO:0007669"/>
    <property type="project" value="UniProtKB-KW"/>
</dbReference>
<dbReference type="GO" id="GO:0006281">
    <property type="term" value="P:DNA repair"/>
    <property type="evidence" value="ECO:0007669"/>
    <property type="project" value="UniProtKB-KW"/>
</dbReference>
<dbReference type="FunFam" id="3.40.50.12350:FF:000006">
    <property type="entry name" value="Eyes absent homolog 4"/>
    <property type="match status" value="1"/>
</dbReference>
<dbReference type="Gene3D" id="3.40.50.12350">
    <property type="match status" value="1"/>
</dbReference>
<dbReference type="InterPro" id="IPR028472">
    <property type="entry name" value="EYA"/>
</dbReference>
<dbReference type="InterPro" id="IPR038102">
    <property type="entry name" value="EYA_dom_sf"/>
</dbReference>
<dbReference type="PANTHER" id="PTHR10190">
    <property type="entry name" value="EYES ABSENT"/>
    <property type="match status" value="1"/>
</dbReference>
<dbReference type="PANTHER" id="PTHR10190:SF17">
    <property type="entry name" value="EYES ABSENT HOMOLOG 4"/>
    <property type="match status" value="1"/>
</dbReference>
<gene>
    <name type="primary">EYA4</name>
</gene>
<evidence type="ECO:0000250" key="1">
    <source>
        <dbReference type="UniProtKB" id="O00167"/>
    </source>
</evidence>
<evidence type="ECO:0000250" key="2">
    <source>
        <dbReference type="UniProtKB" id="Q99502"/>
    </source>
</evidence>
<evidence type="ECO:0000305" key="3"/>